<organism>
    <name type="scientific">Homo sapiens</name>
    <name type="common">Human</name>
    <dbReference type="NCBI Taxonomy" id="9606"/>
    <lineage>
        <taxon>Eukaryota</taxon>
        <taxon>Metazoa</taxon>
        <taxon>Chordata</taxon>
        <taxon>Craniata</taxon>
        <taxon>Vertebrata</taxon>
        <taxon>Euteleostomi</taxon>
        <taxon>Mammalia</taxon>
        <taxon>Eutheria</taxon>
        <taxon>Euarchontoglires</taxon>
        <taxon>Primates</taxon>
        <taxon>Haplorrhini</taxon>
        <taxon>Catarrhini</taxon>
        <taxon>Hominidae</taxon>
        <taxon>Homo</taxon>
    </lineage>
</organism>
<name>OBSL1_HUMAN</name>
<sequence length="1896" mass="206947">MKASSGDQGSPPCFLRFPRPVRVVSGAEAELKCVVLGEPPPVVVWEKGGQQLAASERLSFPADGAEHGLLLTAALPTDAGVYVCRARNAAGEAYAAAAVTVLEPPASDPELQPAERPLPSPGSGEGAPVFLTGPRSQWVLRGAEVVLTCRAGGLPEPTLYWEKDGMALDEVWDSSHFALQPGRAEDGPGASLALRILAARLPDSGVYVCHARNAHGHAQAGALLQVHQPPESPPADPDEAPAPVVEPLKCAPKTFWVNEGKHAKFRCYVMGKPEPEIEWHWEGRPLLPDRRRLMYRDRDGGFVLKVLYCQAKDRGLYVCAARNSAGQTLSAVQLHVKEPRLRFTRPLQDVEGREHGIAVLECKVPNSRIPTAWFREDQRLLPCRKYEQIEEGTVRRLIIHRLKADDDGIYLCEMRGRVRTVANVTVKGPILKRLPRKLDVLEGENAVLLVETLEAGVEGRWSRDGEELPVICQSSSGHMHALVLPGVTREDAGEVTFSLGNSRTTTLLRVKCVKHSPPGPPILAEMFKGHKNTVLLTWKPPEPAPETPFIYRLERQEVGSEDWIQCFSIEKAGAVEVPGDCVPSEGDYRFRICTVSGHGRSPHVVFHGSAHLVPTARLVAGLEDVQVYDGEDAVFSLDLSTIIQGTWFLNGEELKSNEPEGQVEPGALRYRIEQKGLQHRLILHAVKHQDSGALVGFSCPGVQDSAALTIQESPVHILSPQDRVSLTFTTSERVVLTCELSRVDFPATWYKDGQKVEESELLVVKMDGRKHRLILPEAKVQDSGEFECRTEGVSAFFGVTVQDPPVHIVDPREHVFVHAITSECVMLACEVDREDAPVRWYKDGQEVEESDFVVLENEGPHRRLVLPATQPSDGGEFQCVAGDECAYFTVTITDVSSWIVYPSGKVYVAAVRLERVVLTCELCRPWAEVRWTKDGEEVVESPALLLQKEDTVRRLVLPAVQLEDSGEYLCEIDDESASFTVTVTEPPVRIIYPRDEVTLIAVTLECVVLMCELSREDAPVRWYKDGLEVEESEALVLERDGPRCRLVLPAAQPEDGGEFVCDAGDDSAFFTVTVTAPPERIVHPAARSLDLHFGAPGRVELRCEVAPAGSQVRWYKDGLEVEASDALQLGAEGPTRTLTLPHAQPEDAGEYVCETRHEAITFNVILAEPPVQFLALETTPSPLCVAPGEPVVLSCELSRAGAPVVWSHNGRPVQEGEGLELHAEGPRRVLCIQAAGPAHAGLYTCQSGAAPGAPSLSFTVQVAEPPVRVVAPEAAQTRVRSTPGGDLELVVHLSGPGGPVRWYKDGERLASQGRVQLEQAGARQVLRVQGARSGDAGEYLCDAPQDSRIFLVSVEEPLLVKLVSELTPLTVHEGDDATFRCEVSPPDADVTWLRNGAVVTPGPQVEMAQNGSSRILTLRGCQLGDAGTVTLRAGSTATSARLHVRETELLFLRRLQDVRAEEGQDVCLEVETGRVGAAGAVRWVRGGQPLPHDSRLSMAQDGHIHRLFIHGVILADQGTYGCESHHDRTLARLSVRPRQLRVLRPLEDVTISEGGSATFQLELSQEGVTGEWARGGVQLYPGPKCHIHSDGHRHRLVLNGLGLADSGCVSFTADSLRCAARLIVREVPVTIVRGPHDLEVTEGDTATFECELSQALADVTWEKDGNALTPSPRLRLQALGTRRLLQLRRCGPSDAGTYSCAVGTARAGPVRLTVRERTVAVLSELRSVSAREGDGATFECTVSEVETTGRWELGGRPLRPGARVRIRQEGKKHILVLSELRAEDAGEVRFQAGPAQSLALLEVEALPLQMCRHPPREKTVLVGRRAVLEVTVSRSGGHVCWLREGAELCPGDKYEMRSHGPTHSLVIHDVRPEDQGTYCCQAGQDSTHTRLLVEGN</sequence>
<dbReference type="EMBL" id="EF063637">
    <property type="protein sequence ID" value="ABO42327.1"/>
    <property type="molecule type" value="mRNA"/>
</dbReference>
<dbReference type="EMBL" id="EF063638">
    <property type="protein sequence ID" value="ABO42328.1"/>
    <property type="molecule type" value="mRNA"/>
</dbReference>
<dbReference type="EMBL" id="AC009955">
    <property type="status" value="NOT_ANNOTATED_CDS"/>
    <property type="molecule type" value="Genomic_DNA"/>
</dbReference>
<dbReference type="EMBL" id="CH471063">
    <property type="protein sequence ID" value="EAW70770.1"/>
    <property type="molecule type" value="Genomic_DNA"/>
</dbReference>
<dbReference type="EMBL" id="CH471063">
    <property type="protein sequence ID" value="EAW70767.1"/>
    <property type="molecule type" value="Genomic_DNA"/>
</dbReference>
<dbReference type="EMBL" id="BC007201">
    <property type="protein sequence ID" value="AAH07201.1"/>
    <property type="status" value="ALT_INIT"/>
    <property type="molecule type" value="mRNA"/>
</dbReference>
<dbReference type="EMBL" id="AB014557">
    <property type="protein sequence ID" value="BAA31632.2"/>
    <property type="molecule type" value="mRNA"/>
</dbReference>
<dbReference type="CCDS" id="CCDS46520.1">
    <molecule id="O75147-3"/>
</dbReference>
<dbReference type="CCDS" id="CCDS54433.1">
    <molecule id="O75147-2"/>
</dbReference>
<dbReference type="CCDS" id="CCDS63134.1">
    <molecule id="O75147-4"/>
</dbReference>
<dbReference type="RefSeq" id="NP_001166879.1">
    <molecule id="O75147-2"/>
    <property type="nucleotide sequence ID" value="NM_001173408.2"/>
</dbReference>
<dbReference type="RefSeq" id="NP_001166902.1">
    <molecule id="O75147-4"/>
    <property type="nucleotide sequence ID" value="NM_001173431.2"/>
</dbReference>
<dbReference type="RefSeq" id="NP_056126.1">
    <molecule id="O75147-3"/>
    <property type="nucleotide sequence ID" value="NM_015311.3"/>
</dbReference>
<dbReference type="PDB" id="2CPC">
    <property type="method" value="NMR"/>
    <property type="chains" value="A=893-992"/>
</dbReference>
<dbReference type="PDB" id="2E6P">
    <property type="method" value="NMR"/>
    <property type="chains" value="A=714-804"/>
</dbReference>
<dbReference type="PDB" id="2E6Q">
    <property type="method" value="NMR"/>
    <property type="chains" value="A=615-713"/>
</dbReference>
<dbReference type="PDB" id="2LU7">
    <property type="method" value="NMR"/>
    <property type="chains" value="A=1277-1357"/>
</dbReference>
<dbReference type="PDB" id="2LVC">
    <property type="method" value="NMR"/>
    <property type="chains" value="A=805-892"/>
</dbReference>
<dbReference type="PDB" id="2WP3">
    <property type="method" value="X-ray"/>
    <property type="resolution" value="1.48 A"/>
    <property type="chains" value="O=1-106"/>
</dbReference>
<dbReference type="PDB" id="2WWK">
    <property type="method" value="X-ray"/>
    <property type="resolution" value="1.70 A"/>
    <property type="chains" value="O=1-106"/>
</dbReference>
<dbReference type="PDB" id="2WWM">
    <property type="method" value="X-ray"/>
    <property type="resolution" value="2.30 A"/>
    <property type="chains" value="C/O=1-106"/>
</dbReference>
<dbReference type="PDB" id="3KNB">
    <property type="method" value="X-ray"/>
    <property type="resolution" value="1.40 A"/>
    <property type="chains" value="B=1-105"/>
</dbReference>
<dbReference type="PDB" id="5FM5">
    <property type="method" value="X-ray"/>
    <property type="resolution" value="3.10 A"/>
    <property type="chains" value="O/P=251-339"/>
</dbReference>
<dbReference type="PDBsum" id="2CPC"/>
<dbReference type="PDBsum" id="2E6P"/>
<dbReference type="PDBsum" id="2E6Q"/>
<dbReference type="PDBsum" id="2LU7"/>
<dbReference type="PDBsum" id="2LVC"/>
<dbReference type="PDBsum" id="2WP3"/>
<dbReference type="PDBsum" id="2WWK"/>
<dbReference type="PDBsum" id="2WWM"/>
<dbReference type="PDBsum" id="3KNB"/>
<dbReference type="PDBsum" id="5FM5"/>
<dbReference type="SMR" id="O75147"/>
<dbReference type="BioGRID" id="116944">
    <property type="interactions" value="907"/>
</dbReference>
<dbReference type="ComplexPortal" id="CPX-2838">
    <property type="entry name" value="3M complex"/>
</dbReference>
<dbReference type="CORUM" id="O75147"/>
<dbReference type="DIP" id="DIP-38340N"/>
<dbReference type="FunCoup" id="O75147">
    <property type="interactions" value="831"/>
</dbReference>
<dbReference type="IntAct" id="O75147">
    <property type="interactions" value="80"/>
</dbReference>
<dbReference type="MINT" id="O75147"/>
<dbReference type="STRING" id="9606.ENSP00000385636"/>
<dbReference type="GlyCosmos" id="O75147">
    <property type="glycosylation" value="3 sites, 1 glycan"/>
</dbReference>
<dbReference type="GlyGen" id="O75147">
    <property type="glycosylation" value="7 sites, 1 O-linked glycan (5 sites)"/>
</dbReference>
<dbReference type="iPTMnet" id="O75147"/>
<dbReference type="PhosphoSitePlus" id="O75147"/>
<dbReference type="BioMuta" id="OBSL1"/>
<dbReference type="jPOST" id="O75147"/>
<dbReference type="MassIVE" id="O75147"/>
<dbReference type="PaxDb" id="9606-ENSP00000385636"/>
<dbReference type="PeptideAtlas" id="O75147"/>
<dbReference type="ProteomicsDB" id="49811">
    <molecule id="O75147-3"/>
</dbReference>
<dbReference type="ProteomicsDB" id="49812">
    <molecule id="O75147-1"/>
</dbReference>
<dbReference type="ProteomicsDB" id="49813">
    <molecule id="O75147-2"/>
</dbReference>
<dbReference type="Pumba" id="O75147"/>
<dbReference type="Antibodypedia" id="52509">
    <property type="antibodies" value="16 antibodies from 7 providers"/>
</dbReference>
<dbReference type="DNASU" id="23363"/>
<dbReference type="Ensembl" id="ENST00000373873.8">
    <molecule id="O75147-2"/>
    <property type="protein sequence ID" value="ENSP00000362980.4"/>
    <property type="gene ID" value="ENSG00000124006.15"/>
</dbReference>
<dbReference type="Ensembl" id="ENST00000404537.6">
    <molecule id="O75147-3"/>
    <property type="protein sequence ID" value="ENSP00000385636.1"/>
    <property type="gene ID" value="ENSG00000124006.15"/>
</dbReference>
<dbReference type="Ensembl" id="ENST00000603926.5">
    <molecule id="O75147-4"/>
    <property type="protein sequence ID" value="ENSP00000474519.1"/>
    <property type="gene ID" value="ENSG00000124006.15"/>
</dbReference>
<dbReference type="GeneID" id="23363"/>
<dbReference type="KEGG" id="hsa:23363"/>
<dbReference type="MANE-Select" id="ENST00000404537.6">
    <property type="protein sequence ID" value="ENSP00000385636.1"/>
    <property type="RefSeq nucleotide sequence ID" value="NM_015311.3"/>
    <property type="RefSeq protein sequence ID" value="NP_056126.1"/>
</dbReference>
<dbReference type="UCSC" id="uc002vmi.4">
    <molecule id="O75147-3"/>
    <property type="organism name" value="human"/>
</dbReference>
<dbReference type="AGR" id="HGNC:29092"/>
<dbReference type="CTD" id="23363"/>
<dbReference type="DisGeNET" id="23363"/>
<dbReference type="GeneCards" id="OBSL1"/>
<dbReference type="GeneReviews" id="OBSL1"/>
<dbReference type="HGNC" id="HGNC:29092">
    <property type="gene designation" value="OBSL1"/>
</dbReference>
<dbReference type="HPA" id="ENSG00000124006">
    <property type="expression patterns" value="Tissue enhanced (ovary)"/>
</dbReference>
<dbReference type="MalaCards" id="OBSL1"/>
<dbReference type="MIM" id="610991">
    <property type="type" value="gene"/>
</dbReference>
<dbReference type="MIM" id="612921">
    <property type="type" value="phenotype"/>
</dbReference>
<dbReference type="neXtProt" id="NX_O75147"/>
<dbReference type="OpenTargets" id="ENSG00000124006"/>
<dbReference type="Orphanet" id="2616">
    <property type="disease" value="3M syndrome"/>
</dbReference>
<dbReference type="PharmGKB" id="PA142671235"/>
<dbReference type="VEuPathDB" id="HostDB:ENSG00000124006"/>
<dbReference type="eggNOG" id="KOG0613">
    <property type="taxonomic scope" value="Eukaryota"/>
</dbReference>
<dbReference type="GeneTree" id="ENSGT00940000156702"/>
<dbReference type="HOGENOM" id="CLU_000630_0_0_1"/>
<dbReference type="InParanoid" id="O75147"/>
<dbReference type="OMA" id="KAEVRWY"/>
<dbReference type="OrthoDB" id="9355041at2759"/>
<dbReference type="PAN-GO" id="O75147">
    <property type="GO annotations" value="4 GO annotations based on evolutionary models"/>
</dbReference>
<dbReference type="PhylomeDB" id="O75147"/>
<dbReference type="PathwayCommons" id="O75147"/>
<dbReference type="Reactome" id="R-HSA-8951664">
    <property type="pathway name" value="Neddylation"/>
</dbReference>
<dbReference type="SignaLink" id="O75147"/>
<dbReference type="BioGRID-ORCS" id="23363">
    <property type="hits" value="11 hits in 1153 CRISPR screens"/>
</dbReference>
<dbReference type="ChiTaRS" id="CHPF">
    <property type="organism name" value="human"/>
</dbReference>
<dbReference type="ChiTaRS" id="OBSL1">
    <property type="organism name" value="human"/>
</dbReference>
<dbReference type="EvolutionaryTrace" id="O75147"/>
<dbReference type="GeneWiki" id="OBSL1"/>
<dbReference type="GenomeRNAi" id="23363"/>
<dbReference type="Pharos" id="O75147">
    <property type="development level" value="Tbio"/>
</dbReference>
<dbReference type="PRO" id="PR:O75147"/>
<dbReference type="Proteomes" id="UP000005640">
    <property type="component" value="Chromosome 2"/>
</dbReference>
<dbReference type="RNAct" id="O75147">
    <property type="molecule type" value="protein"/>
</dbReference>
<dbReference type="Bgee" id="ENSG00000124006">
    <property type="expression patterns" value="Expressed in right testis and 195 other cell types or tissues"/>
</dbReference>
<dbReference type="ExpressionAtlas" id="O75147">
    <property type="expression patterns" value="baseline and differential"/>
</dbReference>
<dbReference type="GO" id="GO:1990393">
    <property type="term" value="C:3M complex"/>
    <property type="evidence" value="ECO:0000314"/>
    <property type="project" value="UniProtKB"/>
</dbReference>
<dbReference type="GO" id="GO:0005813">
    <property type="term" value="C:centrosome"/>
    <property type="evidence" value="ECO:0000314"/>
    <property type="project" value="UniProtKB"/>
</dbReference>
<dbReference type="GO" id="GO:0005737">
    <property type="term" value="C:cytoplasm"/>
    <property type="evidence" value="ECO:0000314"/>
    <property type="project" value="UniProtKB"/>
</dbReference>
<dbReference type="GO" id="GO:0005829">
    <property type="term" value="C:cytosol"/>
    <property type="evidence" value="ECO:0000304"/>
    <property type="project" value="Reactome"/>
</dbReference>
<dbReference type="GO" id="GO:0005794">
    <property type="term" value="C:Golgi apparatus"/>
    <property type="evidence" value="ECO:0000314"/>
    <property type="project" value="UniProtKB"/>
</dbReference>
<dbReference type="GO" id="GO:0014704">
    <property type="term" value="C:intercalated disc"/>
    <property type="evidence" value="ECO:0000304"/>
    <property type="project" value="BHF-UCL"/>
</dbReference>
<dbReference type="GO" id="GO:0031430">
    <property type="term" value="C:M band"/>
    <property type="evidence" value="ECO:0000304"/>
    <property type="project" value="BHF-UCL"/>
</dbReference>
<dbReference type="GO" id="GO:0048471">
    <property type="term" value="C:perinuclear region of cytoplasm"/>
    <property type="evidence" value="ECO:0000314"/>
    <property type="project" value="UniProtKB"/>
</dbReference>
<dbReference type="GO" id="GO:0030018">
    <property type="term" value="C:Z disc"/>
    <property type="evidence" value="ECO:0000304"/>
    <property type="project" value="BHF-UCL"/>
</dbReference>
<dbReference type="GO" id="GO:0008093">
    <property type="term" value="F:cytoskeletal anchor activity"/>
    <property type="evidence" value="ECO:0000303"/>
    <property type="project" value="BHF-UCL"/>
</dbReference>
<dbReference type="GO" id="GO:0055003">
    <property type="term" value="P:cardiac myofibril assembly"/>
    <property type="evidence" value="ECO:0000303"/>
    <property type="project" value="BHF-UCL"/>
</dbReference>
<dbReference type="GO" id="GO:0007010">
    <property type="term" value="P:cytoskeleton organization"/>
    <property type="evidence" value="ECO:0000303"/>
    <property type="project" value="BHF-UCL"/>
</dbReference>
<dbReference type="GO" id="GO:0007030">
    <property type="term" value="P:Golgi organization"/>
    <property type="evidence" value="ECO:0000315"/>
    <property type="project" value="UniProtKB"/>
</dbReference>
<dbReference type="GO" id="GO:0000226">
    <property type="term" value="P:microtubule cytoskeleton organization"/>
    <property type="evidence" value="ECO:0000315"/>
    <property type="project" value="UniProtKB"/>
</dbReference>
<dbReference type="GO" id="GO:0050775">
    <property type="term" value="P:positive regulation of dendrite morphogenesis"/>
    <property type="evidence" value="ECO:0000315"/>
    <property type="project" value="UniProtKB"/>
</dbReference>
<dbReference type="GO" id="GO:0034067">
    <property type="term" value="P:protein localization to Golgi apparatus"/>
    <property type="evidence" value="ECO:0000315"/>
    <property type="project" value="UniProtKB"/>
</dbReference>
<dbReference type="GO" id="GO:0007088">
    <property type="term" value="P:regulation of mitotic nuclear division"/>
    <property type="evidence" value="ECO:0000315"/>
    <property type="project" value="UniProtKB"/>
</dbReference>
<dbReference type="CDD" id="cd00063">
    <property type="entry name" value="FN3"/>
    <property type="match status" value="1"/>
</dbReference>
<dbReference type="CDD" id="cd00096">
    <property type="entry name" value="Ig"/>
    <property type="match status" value="3"/>
</dbReference>
<dbReference type="CDD" id="cd04979">
    <property type="entry name" value="Ig_Semaphorin_C"/>
    <property type="match status" value="1"/>
</dbReference>
<dbReference type="CDD" id="cd20967">
    <property type="entry name" value="IgI_C2_MyBP-C-like"/>
    <property type="match status" value="1"/>
</dbReference>
<dbReference type="FunFam" id="2.60.40.10:FF:000856">
    <property type="entry name" value="Obscurin like 1"/>
    <property type="match status" value="1"/>
</dbReference>
<dbReference type="FunFam" id="2.60.40.10:FF:000963">
    <property type="entry name" value="Obscurin like 1"/>
    <property type="match status" value="1"/>
</dbReference>
<dbReference type="FunFam" id="2.60.40.10:FF:001210">
    <property type="entry name" value="Obscurin like 1"/>
    <property type="match status" value="1"/>
</dbReference>
<dbReference type="FunFam" id="2.60.40.10:FF:001447">
    <property type="entry name" value="Obscurin like 1"/>
    <property type="match status" value="1"/>
</dbReference>
<dbReference type="FunFam" id="2.60.40.10:FF:001780">
    <property type="entry name" value="Obscurin like 1"/>
    <property type="match status" value="1"/>
</dbReference>
<dbReference type="FunFam" id="2.60.40.10:FF:001811">
    <property type="entry name" value="Obscurin like 1"/>
    <property type="match status" value="1"/>
</dbReference>
<dbReference type="FunFam" id="2.60.40.10:FF:000211">
    <property type="entry name" value="Obscurin-like protein 1"/>
    <property type="match status" value="2"/>
</dbReference>
<dbReference type="FunFam" id="2.60.40.10:FF:001375">
    <property type="entry name" value="Obscurin-like protein 1 isoform X2"/>
    <property type="match status" value="1"/>
</dbReference>
<dbReference type="FunFam" id="2.60.40.10:FF:000241">
    <property type="entry name" value="obscurin-like protein 1 isoform X2"/>
    <property type="match status" value="3"/>
</dbReference>
<dbReference type="FunFam" id="2.60.40.10:FF:000502">
    <property type="entry name" value="obscurin-like protein 1 isoform X2"/>
    <property type="match status" value="1"/>
</dbReference>
<dbReference type="FunFam" id="2.60.40.10:FF:000569">
    <property type="entry name" value="obscurin-like protein 1 isoform X2"/>
    <property type="match status" value="2"/>
</dbReference>
<dbReference type="FunFam" id="2.60.40.10:FF:000608">
    <property type="entry name" value="obscurin-like protein 1 isoform X2"/>
    <property type="match status" value="1"/>
</dbReference>
<dbReference type="FunFam" id="2.60.40.10:FF:000623">
    <property type="entry name" value="obscurin-like protein 1 isoform X2"/>
    <property type="match status" value="1"/>
</dbReference>
<dbReference type="FunFam" id="2.60.40.10:FF:001002">
    <property type="entry name" value="obscurin-like protein 1 isoform X2"/>
    <property type="match status" value="1"/>
</dbReference>
<dbReference type="FunFam" id="2.60.40.10:FF:000393">
    <property type="entry name" value="Putative obscurin-like protein 1"/>
    <property type="match status" value="1"/>
</dbReference>
<dbReference type="FunFam" id="2.60.40.10:FF:000464">
    <property type="entry name" value="Putative obscurin-like protein 1"/>
    <property type="match status" value="1"/>
</dbReference>
<dbReference type="Gene3D" id="2.60.40.10">
    <property type="entry name" value="Immunoglobulins"/>
    <property type="match status" value="20"/>
</dbReference>
<dbReference type="InterPro" id="IPR003961">
    <property type="entry name" value="FN3_dom"/>
</dbReference>
<dbReference type="InterPro" id="IPR036116">
    <property type="entry name" value="FN3_sf"/>
</dbReference>
<dbReference type="InterPro" id="IPR007110">
    <property type="entry name" value="Ig-like_dom"/>
</dbReference>
<dbReference type="InterPro" id="IPR036179">
    <property type="entry name" value="Ig-like_dom_sf"/>
</dbReference>
<dbReference type="InterPro" id="IPR013783">
    <property type="entry name" value="Ig-like_fold"/>
</dbReference>
<dbReference type="InterPro" id="IPR013098">
    <property type="entry name" value="Ig_I-set"/>
</dbReference>
<dbReference type="InterPro" id="IPR003599">
    <property type="entry name" value="Ig_sub"/>
</dbReference>
<dbReference type="InterPro" id="IPR003598">
    <property type="entry name" value="Ig_sub2"/>
</dbReference>
<dbReference type="InterPro" id="IPR052385">
    <property type="entry name" value="Obscurin/Obscurin-like_Reg"/>
</dbReference>
<dbReference type="PANTHER" id="PTHR35971:SF6">
    <property type="entry name" value="OBSCURIN-LIKE PROTEIN 1"/>
    <property type="match status" value="1"/>
</dbReference>
<dbReference type="PANTHER" id="PTHR35971">
    <property type="entry name" value="SI:DKEY-31G6.6"/>
    <property type="match status" value="1"/>
</dbReference>
<dbReference type="Pfam" id="PF07679">
    <property type="entry name" value="I-set"/>
    <property type="match status" value="14"/>
</dbReference>
<dbReference type="Pfam" id="PF13927">
    <property type="entry name" value="Ig_3"/>
    <property type="match status" value="1"/>
</dbReference>
<dbReference type="SMART" id="SM00409">
    <property type="entry name" value="IG"/>
    <property type="match status" value="19"/>
</dbReference>
<dbReference type="SMART" id="SM00408">
    <property type="entry name" value="IGc2"/>
    <property type="match status" value="14"/>
</dbReference>
<dbReference type="SUPFAM" id="SSF49265">
    <property type="entry name" value="Fibronectin type III"/>
    <property type="match status" value="1"/>
</dbReference>
<dbReference type="SUPFAM" id="SSF48726">
    <property type="entry name" value="Immunoglobulin"/>
    <property type="match status" value="18"/>
</dbReference>
<dbReference type="PROSITE" id="PS50853">
    <property type="entry name" value="FN3"/>
    <property type="match status" value="1"/>
</dbReference>
<dbReference type="PROSITE" id="PS50835">
    <property type="entry name" value="IG_LIKE"/>
    <property type="match status" value="14"/>
</dbReference>
<feature type="chain" id="PRO_0000247959" description="Obscurin-like protein 1">
    <location>
        <begin position="1"/>
        <end position="1896"/>
    </location>
</feature>
<feature type="domain" description="Ig-like 1">
    <location>
        <begin position="12"/>
        <end position="100"/>
    </location>
</feature>
<feature type="domain" description="Ig-like 2">
    <location>
        <begin position="128"/>
        <end position="225"/>
    </location>
</feature>
<feature type="domain" description="Ig-like 3">
    <location>
        <begin position="243"/>
        <end position="330"/>
    </location>
</feature>
<feature type="domain" description="Ig-like 4">
    <location>
        <begin position="339"/>
        <end position="425"/>
    </location>
</feature>
<feature type="domain" description="Fibronectin type-III" evidence="2">
    <location>
        <begin position="517"/>
        <end position="615"/>
    </location>
</feature>
<feature type="domain" description="Ig-like 5">
    <location>
        <begin position="714"/>
        <end position="800"/>
    </location>
</feature>
<feature type="domain" description="Ig-like 6">
    <location>
        <begin position="804"/>
        <end position="893"/>
    </location>
</feature>
<feature type="domain" description="Ig-like 7">
    <location>
        <begin position="902"/>
        <end position="982"/>
    </location>
</feature>
<feature type="domain" description="Ig-like 8">
    <location>
        <begin position="986"/>
        <end position="1075"/>
    </location>
</feature>
<feature type="domain" description="Ig-like 9">
    <location>
        <begin position="1078"/>
        <end position="1172"/>
    </location>
</feature>
<feature type="domain" description="Ig-like 10">
    <location>
        <begin position="1174"/>
        <end position="1261"/>
    </location>
</feature>
<feature type="domain" description="Ig-like 11">
    <location>
        <begin position="1265"/>
        <end position="1357"/>
    </location>
</feature>
<feature type="domain" description="Ig-like 12">
    <location>
        <begin position="1357"/>
        <end position="1534"/>
    </location>
</feature>
<feature type="domain" description="Ig-like 13">
    <location>
        <begin position="1628"/>
        <end position="1720"/>
    </location>
</feature>
<feature type="domain" description="Ig-like 14">
    <location>
        <begin position="1794"/>
        <end position="1896"/>
    </location>
</feature>
<feature type="region of interest" description="Interaction with TTN">
    <location>
        <begin position="17"/>
        <end position="19"/>
    </location>
</feature>
<feature type="region of interest" description="Interaction with TTN">
    <location>
        <begin position="85"/>
        <end position="94"/>
    </location>
</feature>
<feature type="region of interest" description="Disordered" evidence="3">
    <location>
        <begin position="106"/>
        <end position="127"/>
    </location>
</feature>
<feature type="modified residue" description="Phosphoserine" evidence="18 19">
    <location>
        <position position="10"/>
    </location>
</feature>
<feature type="disulfide bond" evidence="1">
    <location>
        <begin position="33"/>
        <end position="84"/>
    </location>
</feature>
<feature type="disulfide bond" evidence="1">
    <location>
        <begin position="149"/>
        <end position="209"/>
    </location>
</feature>
<feature type="disulfide bond" evidence="1">
    <location>
        <begin position="267"/>
        <end position="319"/>
    </location>
</feature>
<feature type="disulfide bond" evidence="1">
    <location>
        <begin position="362"/>
        <end position="412"/>
    </location>
</feature>
<feature type="disulfide bond" evidence="1">
    <location>
        <begin position="738"/>
        <end position="788"/>
    </location>
</feature>
<feature type="disulfide bond" evidence="1">
    <location>
        <begin position="829"/>
        <end position="879"/>
    </location>
</feature>
<feature type="disulfide bond" evidence="1">
    <location>
        <begin position="920"/>
        <end position="970"/>
    </location>
</feature>
<feature type="disulfide bond" evidence="1">
    <location>
        <begin position="1011"/>
        <end position="1061"/>
    </location>
</feature>
<feature type="disulfide bond" evidence="1">
    <location>
        <begin position="1103"/>
        <end position="1153"/>
    </location>
</feature>
<feature type="disulfide bond" evidence="1">
    <location>
        <begin position="1195"/>
        <end position="1245"/>
    </location>
</feature>
<feature type="disulfide bond" evidence="1">
    <location>
        <begin position="1381"/>
        <end position="1522"/>
    </location>
</feature>
<feature type="disulfide bond" evidence="1">
    <location>
        <begin position="1650"/>
        <end position="1700"/>
    </location>
</feature>
<feature type="splice variant" id="VSP_040784" description="In isoform 2." evidence="13">
    <original>PPVRIIYPRDEVTLIAVTLECVVLMCELSREDAPVRWYKD</original>
    <variation>SYQSQDSSNNNPELCVLLKKPKTRRLWSRFPPWRRTAGTE</variation>
    <location>
        <begin position="986"/>
        <end position="1025"/>
    </location>
</feature>
<feature type="splice variant" id="VSP_040785" description="In isoform 2." evidence="13">
    <location>
        <begin position="1026"/>
        <end position="1896"/>
    </location>
</feature>
<feature type="splice variant" id="VSP_040786" description="In isoform 3." evidence="15">
    <location>
        <begin position="1076"/>
        <end position="1167"/>
    </location>
</feature>
<feature type="splice variant" id="VSP_040787" description="In isoform 3." evidence="15">
    <original>VEMAQNGSSRILTLRGCQLGDAGTVTLRAGSTATSARLHVRETELLFLRRLQDVRAEEGQDVCLEVETGRVGAAGAVRWVRGGQPLPHD</original>
    <variation>RQSCCSYGGCRMCGQRKARTCVSKWRQAEWVQRGPCAGCEVGSPCPTTLACPWPRMGTSTASSSMVSYWPTRAPTAARATTIAPWPGSA</variation>
    <location>
        <begin position="1405"/>
        <end position="1493"/>
    </location>
</feature>
<feature type="splice variant" id="VSP_040788" description="In isoform 3." evidence="15">
    <location>
        <begin position="1494"/>
        <end position="1896"/>
    </location>
</feature>
<feature type="splice variant" id="VSP_054755" description="In isoform 4." evidence="14">
    <original>PRQLRVL</original>
    <variation>RECPVLS</variation>
    <location>
        <begin position="1537"/>
        <end position="1543"/>
    </location>
</feature>
<feature type="splice variant" id="VSP_054756" description="In isoform 4." evidence="14">
    <location>
        <begin position="1544"/>
        <end position="1896"/>
    </location>
</feature>
<feature type="mutagenesis site" description="Diminishes binding affinity for TTN." evidence="6">
    <original>F</original>
    <variation>R</variation>
    <location>
        <position position="17"/>
    </location>
</feature>
<feature type="sequence conflict" description="In Ref. 5; BAA31632." evidence="16" ref="5">
    <original>G</original>
    <variation>R</variation>
    <location>
        <position position="165"/>
    </location>
</feature>
<feature type="sequence conflict" description="In Ref. 1; ABO42327." evidence="16" ref="1">
    <original>C</original>
    <variation>CG</variation>
    <location>
        <position position="512"/>
    </location>
</feature>
<feature type="sequence conflict" description="In Ref. 4; AAH07201, 5; BAA31632 and 3; EAW70767/EAW70770." evidence="16" ref="4 5 3">
    <original>R</original>
    <variation>K</variation>
    <location>
        <position position="723"/>
    </location>
</feature>
<feature type="sequence conflict" description="In Ref. 5; BAA31632." evidence="16" ref="5">
    <original>E</original>
    <variation>D</variation>
    <location>
        <position position="1365"/>
    </location>
</feature>
<feature type="strand" evidence="25">
    <location>
        <begin position="10"/>
        <end position="16"/>
    </location>
</feature>
<feature type="strand" evidence="25">
    <location>
        <begin position="21"/>
        <end position="24"/>
    </location>
</feature>
<feature type="strand" evidence="25">
    <location>
        <begin position="29"/>
        <end position="39"/>
    </location>
</feature>
<feature type="strand" evidence="25">
    <location>
        <begin position="42"/>
        <end position="47"/>
    </location>
</feature>
<feature type="strand" evidence="25">
    <location>
        <begin position="56"/>
        <end position="59"/>
    </location>
</feature>
<feature type="strand" evidence="25">
    <location>
        <begin position="66"/>
        <end position="73"/>
    </location>
</feature>
<feature type="helix" evidence="25">
    <location>
        <begin position="76"/>
        <end position="78"/>
    </location>
</feature>
<feature type="strand" evidence="25">
    <location>
        <begin position="80"/>
        <end position="88"/>
    </location>
</feature>
<feature type="strand" evidence="25">
    <location>
        <begin position="91"/>
        <end position="102"/>
    </location>
</feature>
<feature type="strand" evidence="26">
    <location>
        <begin position="254"/>
        <end position="258"/>
    </location>
</feature>
<feature type="strand" evidence="26">
    <location>
        <begin position="261"/>
        <end position="267"/>
    </location>
</feature>
<feature type="strand" evidence="26">
    <location>
        <begin position="269"/>
        <end position="273"/>
    </location>
</feature>
<feature type="strand" evidence="26">
    <location>
        <begin position="276"/>
        <end position="281"/>
    </location>
</feature>
<feature type="strand" evidence="26">
    <location>
        <begin position="290"/>
        <end position="296"/>
    </location>
</feature>
<feature type="strand" evidence="26">
    <location>
        <begin position="300"/>
        <end position="306"/>
    </location>
</feature>
<feature type="helix" evidence="26">
    <location>
        <begin position="311"/>
        <end position="313"/>
    </location>
</feature>
<feature type="strand" evidence="26">
    <location>
        <begin position="315"/>
        <end position="322"/>
    </location>
</feature>
<feature type="strand" evidence="26">
    <location>
        <begin position="327"/>
        <end position="337"/>
    </location>
</feature>
<feature type="strand" evidence="22">
    <location>
        <begin position="618"/>
        <end position="620"/>
    </location>
</feature>
<feature type="strand" evidence="22">
    <location>
        <begin position="625"/>
        <end position="628"/>
    </location>
</feature>
<feature type="strand" evidence="22">
    <location>
        <begin position="632"/>
        <end position="641"/>
    </location>
</feature>
<feature type="strand" evidence="22">
    <location>
        <begin position="646"/>
        <end position="651"/>
    </location>
</feature>
<feature type="strand" evidence="22">
    <location>
        <begin position="669"/>
        <end position="672"/>
    </location>
</feature>
<feature type="strand" evidence="22">
    <location>
        <begin position="678"/>
        <end position="685"/>
    </location>
</feature>
<feature type="strand" evidence="22">
    <location>
        <begin position="692"/>
        <end position="699"/>
    </location>
</feature>
<feature type="strand" evidence="22">
    <location>
        <begin position="702"/>
        <end position="711"/>
    </location>
</feature>
<feature type="strand" evidence="21">
    <location>
        <begin position="724"/>
        <end position="732"/>
    </location>
</feature>
<feature type="strand" evidence="21">
    <location>
        <begin position="748"/>
        <end position="751"/>
    </location>
</feature>
<feature type="strand" evidence="21">
    <location>
        <begin position="762"/>
        <end position="767"/>
    </location>
</feature>
<feature type="strand" evidence="21">
    <location>
        <begin position="770"/>
        <end position="777"/>
    </location>
</feature>
<feature type="turn" evidence="21">
    <location>
        <begin position="780"/>
        <end position="782"/>
    </location>
</feature>
<feature type="strand" evidence="21">
    <location>
        <begin position="784"/>
        <end position="789"/>
    </location>
</feature>
<feature type="strand" evidence="21">
    <location>
        <begin position="797"/>
        <end position="802"/>
    </location>
</feature>
<feature type="strand" evidence="24">
    <location>
        <begin position="815"/>
        <end position="818"/>
    </location>
</feature>
<feature type="strand" evidence="24">
    <location>
        <begin position="825"/>
        <end position="830"/>
    </location>
</feature>
<feature type="strand" evidence="24">
    <location>
        <begin position="839"/>
        <end position="842"/>
    </location>
</feature>
<feature type="strand" evidence="24">
    <location>
        <begin position="854"/>
        <end position="858"/>
    </location>
</feature>
<feature type="strand" evidence="24">
    <location>
        <begin position="861"/>
        <end position="868"/>
    </location>
</feature>
<feature type="helix" evidence="24">
    <location>
        <begin position="871"/>
        <end position="873"/>
    </location>
</feature>
<feature type="strand" evidence="24">
    <location>
        <begin position="875"/>
        <end position="880"/>
    </location>
</feature>
<feature type="strand" evidence="24">
    <location>
        <begin position="885"/>
        <end position="891"/>
    </location>
</feature>
<feature type="strand" evidence="20">
    <location>
        <begin position="898"/>
        <end position="902"/>
    </location>
</feature>
<feature type="strand" evidence="20">
    <location>
        <begin position="906"/>
        <end position="911"/>
    </location>
</feature>
<feature type="strand" evidence="20">
    <location>
        <begin position="916"/>
        <end position="923"/>
    </location>
</feature>
<feature type="strand" evidence="20">
    <location>
        <begin position="930"/>
        <end position="933"/>
    </location>
</feature>
<feature type="strand" evidence="20">
    <location>
        <begin position="944"/>
        <end position="948"/>
    </location>
</feature>
<feature type="strand" evidence="20">
    <location>
        <begin position="950"/>
        <end position="959"/>
    </location>
</feature>
<feature type="turn" evidence="20">
    <location>
        <begin position="962"/>
        <end position="964"/>
    </location>
</feature>
<feature type="strand" evidence="20">
    <location>
        <begin position="966"/>
        <end position="974"/>
    </location>
</feature>
<feature type="strand" evidence="20">
    <location>
        <begin position="976"/>
        <end position="984"/>
    </location>
</feature>
<feature type="strand" evidence="23">
    <location>
        <begin position="1279"/>
        <end position="1281"/>
    </location>
</feature>
<feature type="strand" evidence="23">
    <location>
        <begin position="1287"/>
        <end position="1290"/>
    </location>
</feature>
<feature type="strand" evidence="23">
    <location>
        <begin position="1301"/>
        <end position="1304"/>
    </location>
</feature>
<feature type="strand" evidence="23">
    <location>
        <begin position="1313"/>
        <end position="1319"/>
    </location>
</feature>
<feature type="strand" evidence="23">
    <location>
        <begin position="1324"/>
        <end position="1330"/>
    </location>
</feature>
<feature type="strand" evidence="23">
    <location>
        <begin position="1337"/>
        <end position="1342"/>
    </location>
</feature>
<feature type="turn" evidence="23">
    <location>
        <begin position="1344"/>
        <end position="1346"/>
    </location>
</feature>
<feature type="strand" evidence="23">
    <location>
        <begin position="1348"/>
        <end position="1354"/>
    </location>
</feature>
<proteinExistence type="evidence at protein level"/>
<gene>
    <name evidence="17" type="primary">OBSL1</name>
    <name type="synonym">KIAA0657</name>
</gene>
<keyword id="KW-0002">3D-structure</keyword>
<keyword id="KW-0025">Alternative splicing</keyword>
<keyword id="KW-0963">Cytoplasm</keyword>
<keyword id="KW-0206">Cytoskeleton</keyword>
<keyword id="KW-1015">Disulfide bond</keyword>
<keyword id="KW-0242">Dwarfism</keyword>
<keyword id="KW-0333">Golgi apparatus</keyword>
<keyword id="KW-0393">Immunoglobulin domain</keyword>
<keyword id="KW-0597">Phosphoprotein</keyword>
<keyword id="KW-1267">Proteomics identification</keyword>
<keyword id="KW-1185">Reference proteome</keyword>
<keyword id="KW-0677">Repeat</keyword>
<protein>
    <recommendedName>
        <fullName evidence="14">Obscurin-like protein 1</fullName>
    </recommendedName>
</protein>
<reference key="1">
    <citation type="journal article" date="2007" name="Genomics">
        <title>Obscurin-like 1, OBSL1, is a novel cytoskeletal protein related to obscurin.</title>
        <authorList>
            <person name="Geisler S.B."/>
            <person name="Robinson D."/>
            <person name="Hauringa M."/>
            <person name="Raeker M.O."/>
            <person name="Borisov A.B."/>
            <person name="Westfall M.V."/>
            <person name="Russell M.W."/>
        </authorList>
    </citation>
    <scope>NUCLEOTIDE SEQUENCE [LARGE SCALE MRNA] (ISOFORMS 1 AND 4)</scope>
    <scope>TISSUE SPECIFICITY</scope>
    <source>
        <tissue>Heart</tissue>
    </source>
</reference>
<reference key="2">
    <citation type="journal article" date="2005" name="Nature">
        <title>Generation and annotation of the DNA sequences of human chromosomes 2 and 4.</title>
        <authorList>
            <person name="Hillier L.W."/>
            <person name="Graves T.A."/>
            <person name="Fulton R.S."/>
            <person name="Fulton L.A."/>
            <person name="Pepin K.H."/>
            <person name="Minx P."/>
            <person name="Wagner-McPherson C."/>
            <person name="Layman D."/>
            <person name="Wylie K."/>
            <person name="Sekhon M."/>
            <person name="Becker M.C."/>
            <person name="Fewell G.A."/>
            <person name="Delehaunty K.D."/>
            <person name="Miner T.L."/>
            <person name="Nash W.E."/>
            <person name="Kremitzki C."/>
            <person name="Oddy L."/>
            <person name="Du H."/>
            <person name="Sun H."/>
            <person name="Bradshaw-Cordum H."/>
            <person name="Ali J."/>
            <person name="Carter J."/>
            <person name="Cordes M."/>
            <person name="Harris A."/>
            <person name="Isak A."/>
            <person name="van Brunt A."/>
            <person name="Nguyen C."/>
            <person name="Du F."/>
            <person name="Courtney L."/>
            <person name="Kalicki J."/>
            <person name="Ozersky P."/>
            <person name="Abbott S."/>
            <person name="Armstrong J."/>
            <person name="Belter E.A."/>
            <person name="Caruso L."/>
            <person name="Cedroni M."/>
            <person name="Cotton M."/>
            <person name="Davidson T."/>
            <person name="Desai A."/>
            <person name="Elliott G."/>
            <person name="Erb T."/>
            <person name="Fronick C."/>
            <person name="Gaige T."/>
            <person name="Haakenson W."/>
            <person name="Haglund K."/>
            <person name="Holmes A."/>
            <person name="Harkins R."/>
            <person name="Kim K."/>
            <person name="Kruchowski S.S."/>
            <person name="Strong C.M."/>
            <person name="Grewal N."/>
            <person name="Goyea E."/>
            <person name="Hou S."/>
            <person name="Levy A."/>
            <person name="Martinka S."/>
            <person name="Mead K."/>
            <person name="McLellan M.D."/>
            <person name="Meyer R."/>
            <person name="Randall-Maher J."/>
            <person name="Tomlinson C."/>
            <person name="Dauphin-Kohlberg S."/>
            <person name="Kozlowicz-Reilly A."/>
            <person name="Shah N."/>
            <person name="Swearengen-Shahid S."/>
            <person name="Snider J."/>
            <person name="Strong J.T."/>
            <person name="Thompson J."/>
            <person name="Yoakum M."/>
            <person name="Leonard S."/>
            <person name="Pearman C."/>
            <person name="Trani L."/>
            <person name="Radionenko M."/>
            <person name="Waligorski J.E."/>
            <person name="Wang C."/>
            <person name="Rock S.M."/>
            <person name="Tin-Wollam A.-M."/>
            <person name="Maupin R."/>
            <person name="Latreille P."/>
            <person name="Wendl M.C."/>
            <person name="Yang S.-P."/>
            <person name="Pohl C."/>
            <person name="Wallis J.W."/>
            <person name="Spieth J."/>
            <person name="Bieri T.A."/>
            <person name="Berkowicz N."/>
            <person name="Nelson J.O."/>
            <person name="Osborne J."/>
            <person name="Ding L."/>
            <person name="Meyer R."/>
            <person name="Sabo A."/>
            <person name="Shotland Y."/>
            <person name="Sinha P."/>
            <person name="Wohldmann P.E."/>
            <person name="Cook L.L."/>
            <person name="Hickenbotham M.T."/>
            <person name="Eldred J."/>
            <person name="Williams D."/>
            <person name="Jones T.A."/>
            <person name="She X."/>
            <person name="Ciccarelli F.D."/>
            <person name="Izaurralde E."/>
            <person name="Taylor J."/>
            <person name="Schmutz J."/>
            <person name="Myers R.M."/>
            <person name="Cox D.R."/>
            <person name="Huang X."/>
            <person name="McPherson J.D."/>
            <person name="Mardis E.R."/>
            <person name="Clifton S.W."/>
            <person name="Warren W.C."/>
            <person name="Chinwalla A.T."/>
            <person name="Eddy S.R."/>
            <person name="Marra M.A."/>
            <person name="Ovcharenko I."/>
            <person name="Furey T.S."/>
            <person name="Miller W."/>
            <person name="Eichler E.E."/>
            <person name="Bork P."/>
            <person name="Suyama M."/>
            <person name="Torrents D."/>
            <person name="Waterston R.H."/>
            <person name="Wilson R.K."/>
        </authorList>
    </citation>
    <scope>NUCLEOTIDE SEQUENCE [LARGE SCALE GENOMIC DNA]</scope>
</reference>
<reference key="3">
    <citation type="submission" date="2005-07" db="EMBL/GenBank/DDBJ databases">
        <authorList>
            <person name="Mural R.J."/>
            <person name="Istrail S."/>
            <person name="Sutton G.G."/>
            <person name="Florea L."/>
            <person name="Halpern A.L."/>
            <person name="Mobarry C.M."/>
            <person name="Lippert R."/>
            <person name="Walenz B."/>
            <person name="Shatkay H."/>
            <person name="Dew I."/>
            <person name="Miller J.R."/>
            <person name="Flanigan M.J."/>
            <person name="Edwards N.J."/>
            <person name="Bolanos R."/>
            <person name="Fasulo D."/>
            <person name="Halldorsson B.V."/>
            <person name="Hannenhalli S."/>
            <person name="Turner R."/>
            <person name="Yooseph S."/>
            <person name="Lu F."/>
            <person name="Nusskern D.R."/>
            <person name="Shue B.C."/>
            <person name="Zheng X.H."/>
            <person name="Zhong F."/>
            <person name="Delcher A.L."/>
            <person name="Huson D.H."/>
            <person name="Kravitz S.A."/>
            <person name="Mouchard L."/>
            <person name="Reinert K."/>
            <person name="Remington K.A."/>
            <person name="Clark A.G."/>
            <person name="Waterman M.S."/>
            <person name="Eichler E.E."/>
            <person name="Adams M.D."/>
            <person name="Hunkapiller M.W."/>
            <person name="Myers E.W."/>
            <person name="Venter J.C."/>
        </authorList>
    </citation>
    <scope>NUCLEOTIDE SEQUENCE [LARGE SCALE GENOMIC DNA]</scope>
</reference>
<reference key="4">
    <citation type="journal article" date="2004" name="Genome Res.">
        <title>The status, quality, and expansion of the NIH full-length cDNA project: the Mammalian Gene Collection (MGC).</title>
        <authorList>
            <consortium name="The MGC Project Team"/>
        </authorList>
    </citation>
    <scope>NUCLEOTIDE SEQUENCE [LARGE SCALE MRNA] (ISOFORM 2)</scope>
    <source>
        <tissue>Muscle</tissue>
    </source>
</reference>
<reference key="5">
    <citation type="journal article" date="1998" name="DNA Res.">
        <title>Prediction of the coding sequences of unidentified human genes. X. The complete sequences of 100 new cDNA clones from brain which can code for large proteins in vitro.</title>
        <authorList>
            <person name="Ishikawa K."/>
            <person name="Nagase T."/>
            <person name="Suyama M."/>
            <person name="Miyajima N."/>
            <person name="Tanaka A."/>
            <person name="Kotani H."/>
            <person name="Nomura N."/>
            <person name="Ohara O."/>
        </authorList>
    </citation>
    <scope>NUCLEOTIDE SEQUENCE [LARGE SCALE MRNA] OF 165-1896 (ISOFORM 3)</scope>
    <source>
        <tissue>Brain</tissue>
    </source>
</reference>
<reference key="6">
    <citation type="journal article" date="2002" name="DNA Res.">
        <title>Construction of expression-ready cDNA clones for KIAA genes: manual curation of 330 KIAA cDNA clones.</title>
        <authorList>
            <person name="Nakajima D."/>
            <person name="Okazaki N."/>
            <person name="Yamakawa H."/>
            <person name="Kikuno R."/>
            <person name="Ohara O."/>
            <person name="Nagase T."/>
        </authorList>
    </citation>
    <scope>SEQUENCE REVISION</scope>
</reference>
<reference key="7">
    <citation type="journal article" date="2008" name="Proc. Natl. Acad. Sci. U.S.A.">
        <title>A quantitative atlas of mitotic phosphorylation.</title>
        <authorList>
            <person name="Dephoure N."/>
            <person name="Zhou C."/>
            <person name="Villen J."/>
            <person name="Beausoleil S.A."/>
            <person name="Bakalarski C.E."/>
            <person name="Elledge S.J."/>
            <person name="Gygi S.P."/>
        </authorList>
    </citation>
    <scope>PHOSPHORYLATION [LARGE SCALE ANALYSIS] AT SER-10</scope>
    <scope>IDENTIFICATION BY MASS SPECTROMETRY [LARGE SCALE ANALYSIS]</scope>
    <source>
        <tissue>Cervix carcinoma</tissue>
    </source>
</reference>
<reference key="8">
    <citation type="journal article" date="2009" name="Am. J. Hum. Genet.">
        <title>The primordial growth disorder 3-M syndrome connects ubiquitination to the cytoskeletal adaptor OBSL1.</title>
        <authorList>
            <person name="Hanson D."/>
            <person name="Murray P.G."/>
            <person name="Sud A."/>
            <person name="Temtamy S.A."/>
            <person name="Aglan M."/>
            <person name="Superti-Furga A."/>
            <person name="Holder S.E."/>
            <person name="Urquhart J."/>
            <person name="Hilton E."/>
            <person name="Manson F.D.C."/>
            <person name="Scambler P."/>
            <person name="Black G.C.M."/>
            <person name="Clayton P.E."/>
        </authorList>
    </citation>
    <scope>INVOLVEMENT IN 3M2</scope>
</reference>
<reference key="9">
    <citation type="journal article" date="2011" name="Am. J. Hum. Genet.">
        <title>Exome sequencing identifies CCDC8 mutations in 3-M syndrome, Suggesting that CCDC8 Contributes in a Pathway with CUL7 and OBSL1 to Control Human Growth.</title>
        <authorList>
            <person name="Hanson D."/>
            <person name="Murray P.G."/>
            <person name="O'Sullivan J."/>
            <person name="Urquhart J."/>
            <person name="Daly S."/>
            <person name="Bhaskar S.S."/>
            <person name="Biesecker L.G."/>
            <person name="Skae M."/>
            <person name="Smith C."/>
            <person name="Cole T."/>
            <person name="Kirk J."/>
            <person name="Chandler K."/>
            <person name="Kingston H."/>
            <person name="Donnai D."/>
            <person name="Clayton P.E."/>
            <person name="Black G.C."/>
        </authorList>
    </citation>
    <scope>INTERACTION WITH CCDC8 AND CUL7</scope>
</reference>
<reference key="10">
    <citation type="journal article" date="2011" name="PLoS Biol.">
        <title>An OBSL1-Cul7Fbxw8 ubiquitin ligase signaling mechanism regulates Golgi morphology and dendrite patterning.</title>
        <authorList>
            <person name="Litterman N."/>
            <person name="Ikeuchi Y."/>
            <person name="Gallardo G."/>
            <person name="O'Connell B.C."/>
            <person name="Sowa M.E."/>
            <person name="Gygi S.P."/>
            <person name="Harper J.W."/>
            <person name="Bonni A."/>
        </authorList>
    </citation>
    <scope>FUNCTION</scope>
    <scope>INTERACTION WITH FBXW8 AND CUL7</scope>
    <scope>SUBCELLULAR LOCATION</scope>
</reference>
<reference key="11">
    <citation type="journal article" date="2013" name="J. Proteome Res.">
        <title>Toward a comprehensive characterization of a human cancer cell phosphoproteome.</title>
        <authorList>
            <person name="Zhou H."/>
            <person name="Di Palma S."/>
            <person name="Preisinger C."/>
            <person name="Peng M."/>
            <person name="Polat A.N."/>
            <person name="Heck A.J."/>
            <person name="Mohammed S."/>
        </authorList>
    </citation>
    <scope>PHOSPHORYLATION [LARGE SCALE ANALYSIS] AT SER-10</scope>
    <scope>IDENTIFICATION BY MASS SPECTROMETRY [LARGE SCALE ANALYSIS]</scope>
    <source>
        <tissue>Cervix carcinoma</tissue>
        <tissue>Erythroleukemia</tissue>
    </source>
</reference>
<reference key="12">
    <citation type="journal article" date="2014" name="Mol. Cell">
        <title>The 3M complex maintains microtubule and genome integrity.</title>
        <authorList>
            <person name="Yan J."/>
            <person name="Yan F."/>
            <person name="Li Z."/>
            <person name="Sinnott B."/>
            <person name="Cappell K.M."/>
            <person name="Yu Y."/>
            <person name="Mo J."/>
            <person name="Duncan J.A."/>
            <person name="Chen X."/>
            <person name="Cormier-Daire V."/>
            <person name="Whitehurst A.W."/>
            <person name="Xiong Y."/>
        </authorList>
    </citation>
    <scope>FUNCTION</scope>
    <scope>IDENTIFICATION IN THE 3M COMPLEX</scope>
    <scope>SUBCELLULAR LOCATION</scope>
</reference>
<reference key="13">
    <citation type="journal article" date="2014" name="Mol. Cell">
        <title>CUL9 mediates the functions of the 3M complex and ubiquitylates survivin to maintain genome integrity.</title>
        <authorList>
            <person name="Li Z."/>
            <person name="Pei X.H."/>
            <person name="Yan J."/>
            <person name="Yan F."/>
            <person name="Cappell K.M."/>
            <person name="Whitehurst A.W."/>
            <person name="Xiong Y."/>
        </authorList>
    </citation>
    <scope>FUNCTION</scope>
</reference>
<reference key="14">
    <citation type="journal article" date="2012" name="J. Mol. Endocrinol.">
        <title>Mutations in CUL7, OBSL1 and CCDC8 in 3-M syndrome lead to disordered growth factor signalling.</title>
        <authorList>
            <person name="Hanson D."/>
            <person name="Murray P.G."/>
            <person name="Coulson T."/>
            <person name="Sud A."/>
            <person name="Omokanye A."/>
            <person name="Stratta E."/>
            <person name="Sakhinia F."/>
            <person name="Bonshek C."/>
            <person name="Wilson L.C."/>
            <person name="Wakeling E."/>
            <person name="Temtamy S.A."/>
            <person name="Aglan M."/>
            <person name="Rosser E.M."/>
            <person name="Mansour S."/>
            <person name="Carcavilla A."/>
            <person name="Nampoothiri S."/>
            <person name="Khan W.I."/>
            <person name="Banerjee I."/>
            <person name="Chandler K.E."/>
            <person name="Black G.C."/>
            <person name="Clayton P.E."/>
        </authorList>
    </citation>
    <scope>INVOLVEMENT IN 3M2</scope>
</reference>
<reference key="15">
    <citation type="submission" date="2005-11" db="PDB data bank">
        <title>Solution structure of Ig-like domains from human obscurin-like protein 1.</title>
        <authorList>
            <consortium name="RIKEN structural genomics initiative (RSGI)"/>
        </authorList>
    </citation>
    <scope>STRUCTURE BY NMR OF 615-992</scope>
</reference>
<reference key="16">
    <citation type="journal article" date="2010" name="EMBO Rep.">
        <title>Molecular basis of the head-to-tail assembly of giant muscle proteins obscurin-like 1 and titin.</title>
        <authorList>
            <person name="Sauer F."/>
            <person name="Vahokoski J."/>
            <person name="Song Y.H."/>
            <person name="Wilmanns M."/>
        </authorList>
    </citation>
    <scope>X-RAY CRYSTALLOGRAPHY (1.4 ANGSTROMS) OF 1-105 IN COMPLEX WITH THE C-TERMINAL IG-LIKE DOMAIN OF TTN</scope>
    <scope>INTERACTION WITH TTN</scope>
</reference>
<reference key="17">
    <citation type="journal article" date="2010" name="Proc. Natl. Acad. Sci. U.S.A.">
        <title>Structural insight into M-band assembly and mechanics from the titin-obscurin-like-1 complex.</title>
        <authorList>
            <person name="Pernigo S."/>
            <person name="Fukuzawa A."/>
            <person name="Bertz M."/>
            <person name="Holt M."/>
            <person name="Rief M."/>
            <person name="Steiner R.A."/>
            <person name="Gautel M."/>
        </authorList>
    </citation>
    <scope>X-RAY CRYSTALLOGRAPHY (1.48 ANGSTROMS) OF 1-106 OF WILD-TYPE AND MUTANT ARG-17 IN COMPLEX WITH THE C-TERMINAL IG-LIKE DOMAIN OF TTN</scope>
    <scope>INTERACTION WITH TTN</scope>
    <scope>MUTAGENESIS OF PHE-17</scope>
</reference>
<reference key="18">
    <citation type="submission" date="2012-06" db="PDB data bank">
        <title>Solution NMR structure of Ig like domain (805-892) of obscurin-like protein 1 from Homo sapiens, Northeast Structural Genomics Consortium (NESG) Target HR8578K (CASP Target).</title>
        <authorList>
            <consortium name="Northeast structural genomics consortium (NESG)"/>
        </authorList>
    </citation>
    <scope>STRUCTURE BY NMR OF 805-892</scope>
</reference>
<reference key="19">
    <citation type="submission" date="2012-06" db="PDB data bank">
        <title>Solution NMR Structure of Ig like domain (1277-1357) of Obscurin-like protein 1 from Homo sapiens, Northeast Structural Genomics Consortium (NESG) Target HR8578D (CASP Target).</title>
        <authorList>
            <consortium name="Northeast structural genomics consortium (NESG)"/>
        </authorList>
    </citation>
    <scope>STRUCTURE BY NMR OF 1277-1357</scope>
</reference>
<accession>O75147</accession>
<accession>A0A024R468</accession>
<accession>A4KVA4</accession>
<accession>A4KVA5</accession>
<accession>Q96IW3</accession>
<accession>S4R3M6</accession>
<comment type="function">
    <text evidence="8 11 12">Core component of the 3M complex, a complex required to regulate microtubule dynamics and genome integrity. It is unclear how the 3M complex regulates microtubules, it could act by controlling the level of a microtubule stabilizer (PubMed:24793695, PubMed:24793696). Acts as a regulator of the Cul7-RING(FBXW8) ubiquitin-protein ligase, playing a critical role in the ubiquitin ligase pathway that regulates Golgi morphogenesis and dendrite patterning in brain. Required to localize CUL7 to the Golgi apparatus in neurons.</text>
</comment>
<comment type="subunit">
    <text evidence="6 7 8 9 11">Component of the 3M complex, composed of core components CUL7, CCDC8 and OBSL1. Interacts with CCDC8. Interacts with CUL7; the interaction is direct. Interacts with FBXW8. Interacts (via N-terminal Ig-like domain) with TTN/titin (via C-terminal Ig-like domain); the interaction is direct.</text>
</comment>
<comment type="interaction">
    <interactant intactId="EBI-1223896">
        <id>O75147</id>
    </interactant>
    <interactant intactId="EBI-681210">
        <id>Q8WZ42</id>
        <label>TTN</label>
    </interactant>
    <organismsDiffer>false</organismsDiffer>
    <experiments>13</experiments>
</comment>
<comment type="interaction">
    <interactant intactId="EBI-15927144">
        <id>O75147-2</id>
    </interactant>
    <interactant intactId="EBI-308606">
        <id>Q14999</id>
        <label>CUL7</label>
    </interactant>
    <organismsDiffer>false</organismsDiffer>
    <experiments>4</experiments>
</comment>
<comment type="subcellular location">
    <subcellularLocation>
        <location evidence="11">Cytoplasm</location>
    </subcellularLocation>
    <subcellularLocation>
        <location evidence="11">Cytoplasm</location>
        <location evidence="11">Cytoskeleton</location>
        <location evidence="11">Microtubule organizing center</location>
        <location evidence="11">Centrosome</location>
    </subcellularLocation>
    <subcellularLocation>
        <location evidence="11">Cytoplasm</location>
        <location evidence="11">Perinuclear region</location>
    </subcellularLocation>
    <subcellularLocation>
        <location evidence="8">Golgi apparatus</location>
    </subcellularLocation>
    <text>Colocalizes with CUL7 at the Golgi apparatus in neurons (PubMed:21572988).</text>
</comment>
<comment type="alternative products">
    <event type="alternative splicing"/>
    <isoform>
        <id>O75147-3</id>
        <name>1</name>
        <sequence type="displayed"/>
    </isoform>
    <isoform>
        <id>O75147-2</id>
        <name>2</name>
        <sequence type="described" ref="VSP_040784 VSP_040785"/>
    </isoform>
    <isoform>
        <id>O75147-1</id>
        <name>3</name>
        <sequence type="described" ref="VSP_040786 VSP_040787 VSP_040788"/>
    </isoform>
    <isoform>
        <id>O75147-4</id>
        <name>4</name>
        <sequence type="described" ref="VSP_054755 VSP_054756"/>
    </isoform>
</comment>
<comment type="tissue specificity">
    <text evidence="4">Widely expressed, with predominant levels found in the heart.</text>
</comment>
<comment type="disease" evidence="5 10">
    <disease id="DI-02472">
        <name>3M syndrome 2</name>
        <acronym>3M2</acronym>
        <description>An autosomal recessive disorder characterized by severe pre- and postnatal growth retardation, facial dysmorphism, large head circumference, and normal intelligence and endocrine function. Skeletal changes include long slender tubular bones and tall vertebral bodies.</description>
        <dbReference type="MIM" id="612921"/>
    </disease>
    <text>The disease is caused by variants affecting the gene represented in this entry.</text>
</comment>
<comment type="sequence caution" evidence="16">
    <conflict type="erroneous initiation">
        <sequence resource="EMBL-CDS" id="AAH07201"/>
    </conflict>
    <text>Extended N-terminus.</text>
</comment>
<evidence type="ECO:0000255" key="1">
    <source>
        <dbReference type="PROSITE-ProRule" id="PRU00114"/>
    </source>
</evidence>
<evidence type="ECO:0000255" key="2">
    <source>
        <dbReference type="PROSITE-ProRule" id="PRU00316"/>
    </source>
</evidence>
<evidence type="ECO:0000256" key="3">
    <source>
        <dbReference type="SAM" id="MobiDB-lite"/>
    </source>
</evidence>
<evidence type="ECO:0000269" key="4">
    <source>
    </source>
</evidence>
<evidence type="ECO:0000269" key="5">
    <source>
    </source>
</evidence>
<evidence type="ECO:0000269" key="6">
    <source>
    </source>
</evidence>
<evidence type="ECO:0000269" key="7">
    <source>
    </source>
</evidence>
<evidence type="ECO:0000269" key="8">
    <source>
    </source>
</evidence>
<evidence type="ECO:0000269" key="9">
    <source>
    </source>
</evidence>
<evidence type="ECO:0000269" key="10">
    <source>
    </source>
</evidence>
<evidence type="ECO:0000269" key="11">
    <source>
    </source>
</evidence>
<evidence type="ECO:0000269" key="12">
    <source>
    </source>
</evidence>
<evidence type="ECO:0000303" key="13">
    <source>
    </source>
</evidence>
<evidence type="ECO:0000303" key="14">
    <source>
    </source>
</evidence>
<evidence type="ECO:0000303" key="15">
    <source>
    </source>
</evidence>
<evidence type="ECO:0000305" key="16"/>
<evidence type="ECO:0000312" key="17">
    <source>
        <dbReference type="HGNC" id="HGNC:29092"/>
    </source>
</evidence>
<evidence type="ECO:0007744" key="18">
    <source>
    </source>
</evidence>
<evidence type="ECO:0007744" key="19">
    <source>
    </source>
</evidence>
<evidence type="ECO:0007829" key="20">
    <source>
        <dbReference type="PDB" id="2CPC"/>
    </source>
</evidence>
<evidence type="ECO:0007829" key="21">
    <source>
        <dbReference type="PDB" id="2E6P"/>
    </source>
</evidence>
<evidence type="ECO:0007829" key="22">
    <source>
        <dbReference type="PDB" id="2E6Q"/>
    </source>
</evidence>
<evidence type="ECO:0007829" key="23">
    <source>
        <dbReference type="PDB" id="2LU7"/>
    </source>
</evidence>
<evidence type="ECO:0007829" key="24">
    <source>
        <dbReference type="PDB" id="2LVC"/>
    </source>
</evidence>
<evidence type="ECO:0007829" key="25">
    <source>
        <dbReference type="PDB" id="3KNB"/>
    </source>
</evidence>
<evidence type="ECO:0007829" key="26">
    <source>
        <dbReference type="PDB" id="5FM5"/>
    </source>
</evidence>